<comment type="function">
    <text evidence="3">Polyprenyl transferase; part of the gene cluster that mediates the biosynthesis of meroterpenoids called sartorypyrones (PubMed:37860661). Within the pathway, spyF catalyzes the prenylation of triacetic acid lactone (TAL) to produce geranylgeranyl-triacetate lactone (PubMed:37860661). The biosynthesis of sartorypyrones begins with the production of triacetic acid lactone (TAL) by the NR-PKS spyA using one molecule of acetyl-CoA and two molecules of malonyl-CoA. The prenyltransferase spyF then conjugates geranylgeranyl pyrophosphate (GGPP) to TAL to form geranylgeranyl-triacetate lactone, for which the pathway-specific geranylgeranyl pyrophosphate synthase (GGPS) spyE is required to provide GGPP. Subsequently, geranylgeranyl-triacetate lactone is epoxidized at the terminal olein by the FAD-dependent monooxygenase spyC, followed by cyclization of the terpenoid component catalyzed by the terpene cyclase spyD to produce both the bicyclic sartorypyrone F and the monocyclic sartorypyrone D. Finally, the last step of the biosynthesis involves the acetylation of the meroterpenoids sartorypyrones D and F by the acetyltransferase SpyB to produce sartorypyrones A and G, respectively (PubMed:37860661).</text>
</comment>
<comment type="catalytic activity">
    <reaction evidence="3">
        <text>triacetate lactone + (2E,6E,10E)-geranylgeranyl diphosphate = (2E,6E,10E)-geranylgeranyl-triacetate lactone + diphosphate</text>
        <dbReference type="Rhea" id="RHEA:80863"/>
        <dbReference type="ChEBI" id="CHEBI:16458"/>
        <dbReference type="ChEBI" id="CHEBI:33019"/>
        <dbReference type="ChEBI" id="CHEBI:58756"/>
        <dbReference type="ChEBI" id="CHEBI:231737"/>
    </reaction>
    <physiologicalReaction direction="left-to-right" evidence="3">
        <dbReference type="Rhea" id="RHEA:80864"/>
    </physiologicalReaction>
</comment>
<comment type="cofactor">
    <cofactor evidence="1">
        <name>Mg(2+)</name>
        <dbReference type="ChEBI" id="CHEBI:18420"/>
    </cofactor>
</comment>
<comment type="pathway">
    <text evidence="3">Secondary metabolite biosynthesis; terpenoid biosynthesis.</text>
</comment>
<comment type="subcellular location">
    <subcellularLocation>
        <location evidence="2">Membrane</location>
        <topology evidence="2">Multi-pass membrane protein</topology>
    </subcellularLocation>
</comment>
<comment type="disruption phenotype">
    <text evidence="3">Accumulates triacetic acid lactone (TAL).</text>
</comment>
<comment type="similarity">
    <text evidence="5">Belongs to the UbiA prenyltransferase family.</text>
</comment>
<dbReference type="EC" id="2.5.1.-" evidence="3"/>
<dbReference type="EMBL" id="AAHF01000014">
    <property type="protein sequence ID" value="EAL84927.1"/>
    <property type="molecule type" value="Genomic_DNA"/>
</dbReference>
<dbReference type="RefSeq" id="XP_746965.1">
    <property type="nucleotide sequence ID" value="XM_741872.1"/>
</dbReference>
<dbReference type="SMR" id="Q4WBI5"/>
<dbReference type="STRING" id="330879.Q4WBI5"/>
<dbReference type="EnsemblFungi" id="EAL84927">
    <property type="protein sequence ID" value="EAL84927"/>
    <property type="gene ID" value="AFUA_8G02410"/>
</dbReference>
<dbReference type="GeneID" id="3504514"/>
<dbReference type="KEGG" id="afm:AFUA_8G02410"/>
<dbReference type="eggNOG" id="KOG1381">
    <property type="taxonomic scope" value="Eukaryota"/>
</dbReference>
<dbReference type="HOGENOM" id="CLU_075330_0_0_1"/>
<dbReference type="InParanoid" id="Q4WBI5"/>
<dbReference type="OMA" id="FTIAWPA"/>
<dbReference type="OrthoDB" id="18170at2759"/>
<dbReference type="UniPathway" id="UPA00213"/>
<dbReference type="Proteomes" id="UP000002530">
    <property type="component" value="Chromosome 8"/>
</dbReference>
<dbReference type="GO" id="GO:0005886">
    <property type="term" value="C:plasma membrane"/>
    <property type="evidence" value="ECO:0000318"/>
    <property type="project" value="GO_Central"/>
</dbReference>
<dbReference type="GO" id="GO:0016740">
    <property type="term" value="F:transferase activity"/>
    <property type="evidence" value="ECO:0000318"/>
    <property type="project" value="GO_Central"/>
</dbReference>
<dbReference type="GO" id="GO:0016765">
    <property type="term" value="F:transferase activity, transferring alkyl or aryl (other than methyl) groups"/>
    <property type="evidence" value="ECO:0007669"/>
    <property type="project" value="InterPro"/>
</dbReference>
<dbReference type="GO" id="GO:0016114">
    <property type="term" value="P:terpenoid biosynthetic process"/>
    <property type="evidence" value="ECO:0007669"/>
    <property type="project" value="UniProtKB-UniPathway"/>
</dbReference>
<dbReference type="CDD" id="cd13959">
    <property type="entry name" value="PT_UbiA_COQ2"/>
    <property type="match status" value="1"/>
</dbReference>
<dbReference type="FunFam" id="1.10.357.140:FF:000008">
    <property type="entry name" value="4-hydroxybenzoate octaprenyltransferase"/>
    <property type="match status" value="1"/>
</dbReference>
<dbReference type="FunFam" id="1.20.120.1780:FF:000001">
    <property type="entry name" value="4-hydroxybenzoate octaprenyltransferase"/>
    <property type="match status" value="1"/>
</dbReference>
<dbReference type="Gene3D" id="1.10.357.140">
    <property type="entry name" value="UbiA prenyltransferase"/>
    <property type="match status" value="1"/>
</dbReference>
<dbReference type="Gene3D" id="1.20.120.1780">
    <property type="entry name" value="UbiA prenyltransferase"/>
    <property type="match status" value="1"/>
</dbReference>
<dbReference type="InterPro" id="IPR039653">
    <property type="entry name" value="Prenyltransferase"/>
</dbReference>
<dbReference type="InterPro" id="IPR000537">
    <property type="entry name" value="UbiA_prenyltransferase"/>
</dbReference>
<dbReference type="InterPro" id="IPR030470">
    <property type="entry name" value="UbiA_prenylTrfase_CS"/>
</dbReference>
<dbReference type="InterPro" id="IPR044878">
    <property type="entry name" value="UbiA_sf"/>
</dbReference>
<dbReference type="PANTHER" id="PTHR11048:SF28">
    <property type="entry name" value="4-HYDROXYBENZOATE POLYPRENYLTRANSFERASE, MITOCHONDRIAL"/>
    <property type="match status" value="1"/>
</dbReference>
<dbReference type="PANTHER" id="PTHR11048">
    <property type="entry name" value="PRENYLTRANSFERASES"/>
    <property type="match status" value="1"/>
</dbReference>
<dbReference type="Pfam" id="PF01040">
    <property type="entry name" value="UbiA"/>
    <property type="match status" value="2"/>
</dbReference>
<dbReference type="PROSITE" id="PS00943">
    <property type="entry name" value="UBIA"/>
    <property type="match status" value="1"/>
</dbReference>
<keyword id="KW-0472">Membrane</keyword>
<keyword id="KW-1185">Reference proteome</keyword>
<keyword id="KW-0808">Transferase</keyword>
<keyword id="KW-0812">Transmembrane</keyword>
<keyword id="KW-1133">Transmembrane helix</keyword>
<gene>
    <name evidence="4" type="primary">spyF</name>
    <name type="ORF">AFUA_8G02410</name>
</gene>
<name>SPYF_ASPFU</name>
<proteinExistence type="evidence at protein level"/>
<feature type="chain" id="PRO_0000461223" description="Polyprenyl transferase spyF">
    <location>
        <begin position="1"/>
        <end position="343"/>
    </location>
</feature>
<feature type="transmembrane region" description="Helical" evidence="2">
    <location>
        <begin position="38"/>
        <end position="58"/>
    </location>
</feature>
<feature type="transmembrane region" description="Helical" evidence="2">
    <location>
        <begin position="62"/>
        <end position="82"/>
    </location>
</feature>
<feature type="transmembrane region" description="Helical" evidence="2">
    <location>
        <begin position="92"/>
        <end position="112"/>
    </location>
</feature>
<feature type="transmembrane region" description="Helical" evidence="2">
    <location>
        <begin position="138"/>
        <end position="158"/>
    </location>
</feature>
<feature type="transmembrane region" description="Helical" evidence="2">
    <location>
        <begin position="170"/>
        <end position="190"/>
    </location>
</feature>
<feature type="transmembrane region" description="Helical" evidence="2">
    <location>
        <begin position="241"/>
        <end position="261"/>
    </location>
</feature>
<feature type="transmembrane region" description="Helical" evidence="2">
    <location>
        <begin position="273"/>
        <end position="293"/>
    </location>
</feature>
<feature type="transmembrane region" description="Helical" evidence="2">
    <location>
        <begin position="311"/>
        <end position="331"/>
    </location>
</feature>
<reference key="1">
    <citation type="journal article" date="2005" name="Nature">
        <title>Genomic sequence of the pathogenic and allergenic filamentous fungus Aspergillus fumigatus.</title>
        <authorList>
            <person name="Nierman W.C."/>
            <person name="Pain A."/>
            <person name="Anderson M.J."/>
            <person name="Wortman J.R."/>
            <person name="Kim H.S."/>
            <person name="Arroyo J."/>
            <person name="Berriman M."/>
            <person name="Abe K."/>
            <person name="Archer D.B."/>
            <person name="Bermejo C."/>
            <person name="Bennett J.W."/>
            <person name="Bowyer P."/>
            <person name="Chen D."/>
            <person name="Collins M."/>
            <person name="Coulsen R."/>
            <person name="Davies R."/>
            <person name="Dyer P.S."/>
            <person name="Farman M.L."/>
            <person name="Fedorova N."/>
            <person name="Fedorova N.D."/>
            <person name="Feldblyum T.V."/>
            <person name="Fischer R."/>
            <person name="Fosker N."/>
            <person name="Fraser A."/>
            <person name="Garcia J.L."/>
            <person name="Garcia M.J."/>
            <person name="Goble A."/>
            <person name="Goldman G.H."/>
            <person name="Gomi K."/>
            <person name="Griffith-Jones S."/>
            <person name="Gwilliam R."/>
            <person name="Haas B.J."/>
            <person name="Haas H."/>
            <person name="Harris D.E."/>
            <person name="Horiuchi H."/>
            <person name="Huang J."/>
            <person name="Humphray S."/>
            <person name="Jimenez J."/>
            <person name="Keller N."/>
            <person name="Khouri H."/>
            <person name="Kitamoto K."/>
            <person name="Kobayashi T."/>
            <person name="Konzack S."/>
            <person name="Kulkarni R."/>
            <person name="Kumagai T."/>
            <person name="Lafton A."/>
            <person name="Latge J.-P."/>
            <person name="Li W."/>
            <person name="Lord A."/>
            <person name="Lu C."/>
            <person name="Majoros W.H."/>
            <person name="May G.S."/>
            <person name="Miller B.L."/>
            <person name="Mohamoud Y."/>
            <person name="Molina M."/>
            <person name="Monod M."/>
            <person name="Mouyna I."/>
            <person name="Mulligan S."/>
            <person name="Murphy L.D."/>
            <person name="O'Neil S."/>
            <person name="Paulsen I."/>
            <person name="Penalva M.A."/>
            <person name="Pertea M."/>
            <person name="Price C."/>
            <person name="Pritchard B.L."/>
            <person name="Quail M.A."/>
            <person name="Rabbinowitsch E."/>
            <person name="Rawlins N."/>
            <person name="Rajandream M.A."/>
            <person name="Reichard U."/>
            <person name="Renauld H."/>
            <person name="Robson G.D."/>
            <person name="Rodriguez de Cordoba S."/>
            <person name="Rodriguez-Pena J.M."/>
            <person name="Ronning C.M."/>
            <person name="Rutter S."/>
            <person name="Salzberg S.L."/>
            <person name="Sanchez M."/>
            <person name="Sanchez-Ferrero J.C."/>
            <person name="Saunders D."/>
            <person name="Seeger K."/>
            <person name="Squares R."/>
            <person name="Squares S."/>
            <person name="Takeuchi M."/>
            <person name="Tekaia F."/>
            <person name="Turner G."/>
            <person name="Vazquez de Aldana C.R."/>
            <person name="Weidman J."/>
            <person name="White O."/>
            <person name="Woodward J.R."/>
            <person name="Yu J.-H."/>
            <person name="Fraser C.M."/>
            <person name="Galagan J.E."/>
            <person name="Asai K."/>
            <person name="Machida M."/>
            <person name="Hall N."/>
            <person name="Barrell B.G."/>
            <person name="Denning D.W."/>
        </authorList>
    </citation>
    <scope>NUCLEOTIDE SEQUENCE [LARGE SCALE GENOMIC DNA]</scope>
    <source>
        <strain>ATCC MYA-4609 / CBS 101355 / FGSC A1100 / Af293</strain>
    </source>
</reference>
<reference key="2">
    <citation type="journal article" date="2023" name="Chem. Sci.">
        <title>A heterologous expression platform in Aspergillus nidulans for the elucidation of cryptic secondary metabolism biosynthetic gene clusters: discovery of the Aspergillus fumigatus sartorypyrone biosynthetic pathway.</title>
        <authorList>
            <person name="Lin S.Y."/>
            <person name="Oakley C.E."/>
            <person name="Jenkinson C.B."/>
            <person name="Chiang Y.M."/>
            <person name="Lee C.K."/>
            <person name="Jones C.G."/>
            <person name="Seidler P.M."/>
            <person name="Nelson H.M."/>
            <person name="Todd R.B."/>
            <person name="Wang C.C.C."/>
            <person name="Oakley B.R."/>
        </authorList>
    </citation>
    <scope>FUNCTION</scope>
    <scope>DISRUPTION PHENOTYPE</scope>
    <scope>CATALYTIC ACTIVITY</scope>
    <scope>PATHWAY</scope>
</reference>
<accession>Q4WBI5</accession>
<evidence type="ECO:0000250" key="1">
    <source>
        <dbReference type="UniProtKB" id="P32378"/>
    </source>
</evidence>
<evidence type="ECO:0000255" key="2"/>
<evidence type="ECO:0000269" key="3">
    <source>
    </source>
</evidence>
<evidence type="ECO:0000303" key="4">
    <source>
    </source>
</evidence>
<evidence type="ECO:0000305" key="5"/>
<sequence length="343" mass="38178">MCKMYKVVETDASPGQRSVLQLVKDLLILSRFHKYNPWLAVFSGGVSLPILIGNSHPLTSGVSVWATLLAGANQIATHPASISADHIVKQTLLCLICGYIFCGAGMVWNDWIDRNIDKNVARTKNRPLAAGRVTATEGFIWMMVHVAAMIPVTISTILYPFGKRQLCRRLYIYPQYFLGFSLAWPGAIGWMAIKGRQIPFTQSISESLPLSITVFTWTLYLNTAYSYQDVVDDSKMNVNSAYVAAGSRIHMFLVILAGLVLGSLYLQLRAQNSGWLWASWMCVWALSFVHQLLRFDAKKPESGGPLHKENFALGVWTIVACAAELGLSSGMADQFFSNRVFRR</sequence>
<protein>
    <recommendedName>
        <fullName evidence="4">Polyprenyl transferase spyF</fullName>
        <ecNumber evidence="3">2.5.1.-</ecNumber>
    </recommendedName>
    <alternativeName>
        <fullName evidence="4">Sartorypyrone biosynthesis cluster protein F</fullName>
    </alternativeName>
</protein>
<organism>
    <name type="scientific">Aspergillus fumigatus (strain ATCC MYA-4609 / CBS 101355 / FGSC A1100 / Af293)</name>
    <name type="common">Neosartorya fumigata</name>
    <dbReference type="NCBI Taxonomy" id="330879"/>
    <lineage>
        <taxon>Eukaryota</taxon>
        <taxon>Fungi</taxon>
        <taxon>Dikarya</taxon>
        <taxon>Ascomycota</taxon>
        <taxon>Pezizomycotina</taxon>
        <taxon>Eurotiomycetes</taxon>
        <taxon>Eurotiomycetidae</taxon>
        <taxon>Eurotiales</taxon>
        <taxon>Aspergillaceae</taxon>
        <taxon>Aspergillus</taxon>
        <taxon>Aspergillus subgen. Fumigati</taxon>
    </lineage>
</organism>